<feature type="chain" id="PRO_0000210240" description="Putative syntaxin-2">
    <location>
        <begin position="1"/>
        <end position="299"/>
    </location>
</feature>
<feature type="topological domain" description="Cytoplasmic" evidence="2">
    <location>
        <begin position="1"/>
        <end position="270"/>
    </location>
</feature>
<feature type="transmembrane region" description="Helical; Anchor for type IV membrane protein" evidence="2">
    <location>
        <begin position="271"/>
        <end position="291"/>
    </location>
</feature>
<feature type="topological domain" description="Extracellular" evidence="2">
    <location>
        <begin position="292"/>
        <end position="299"/>
    </location>
</feature>
<feature type="domain" description="t-SNARE coiled-coil homology" evidence="3">
    <location>
        <begin position="193"/>
        <end position="255"/>
    </location>
</feature>
<feature type="coiled-coil region" evidence="2">
    <location>
        <begin position="112"/>
        <end position="146"/>
    </location>
</feature>
<gene>
    <name type="primary">syx-2</name>
    <name type="synonym">syn-2</name>
    <name type="ORF">F48F7.2</name>
</gene>
<dbReference type="EMBL" id="Z69661">
    <property type="protein sequence ID" value="CAA93492.4"/>
    <property type="molecule type" value="Genomic_DNA"/>
</dbReference>
<dbReference type="PIR" id="E89697">
    <property type="entry name" value="E89697"/>
</dbReference>
<dbReference type="PIR" id="T22390">
    <property type="entry name" value="T22390"/>
</dbReference>
<dbReference type="RefSeq" id="NP_510323.3">
    <property type="nucleotide sequence ID" value="NM_077922.4"/>
</dbReference>
<dbReference type="SMR" id="Q20574"/>
<dbReference type="FunCoup" id="Q20574">
    <property type="interactions" value="22"/>
</dbReference>
<dbReference type="STRING" id="6239.F48F7.2.2"/>
<dbReference type="iPTMnet" id="Q20574"/>
<dbReference type="PaxDb" id="6239-F48F7.2.2"/>
<dbReference type="PeptideAtlas" id="Q20574"/>
<dbReference type="EnsemblMetazoa" id="F48F7.2.1">
    <property type="protein sequence ID" value="F48F7.2.1"/>
    <property type="gene ID" value="WBGene00006372"/>
</dbReference>
<dbReference type="GeneID" id="181505"/>
<dbReference type="KEGG" id="cel:CELE_F48F7.2"/>
<dbReference type="UCSC" id="F48F7.2.1">
    <property type="organism name" value="c. elegans"/>
</dbReference>
<dbReference type="AGR" id="WB:WBGene00006372"/>
<dbReference type="CTD" id="181505"/>
<dbReference type="WormBase" id="F48F7.2">
    <property type="protein sequence ID" value="CE37520"/>
    <property type="gene ID" value="WBGene00006372"/>
    <property type="gene designation" value="syx-2"/>
</dbReference>
<dbReference type="eggNOG" id="KOG0810">
    <property type="taxonomic scope" value="Eukaryota"/>
</dbReference>
<dbReference type="GeneTree" id="ENSGT01000000214440"/>
<dbReference type="HOGENOM" id="CLU_931369_0_0_1"/>
<dbReference type="InParanoid" id="Q20574"/>
<dbReference type="OMA" id="AMRKKIC"/>
<dbReference type="OrthoDB" id="10255013at2759"/>
<dbReference type="PhylomeDB" id="Q20574"/>
<dbReference type="Reactome" id="R-CEL-114516">
    <property type="pathway name" value="Disinhibition of SNARE formation"/>
</dbReference>
<dbReference type="Reactome" id="R-CEL-199992">
    <property type="pathway name" value="trans-Golgi Network Vesicle Budding"/>
</dbReference>
<dbReference type="Reactome" id="R-CEL-449836">
    <property type="pathway name" value="Other interleukin signaling"/>
</dbReference>
<dbReference type="PRO" id="PR:Q20574"/>
<dbReference type="Proteomes" id="UP000001940">
    <property type="component" value="Chromosome X"/>
</dbReference>
<dbReference type="Bgee" id="WBGene00006372">
    <property type="expression patterns" value="Expressed in pharyngeal muscle cell (C elegans) and 3 other cell types or tissues"/>
</dbReference>
<dbReference type="GO" id="GO:0012505">
    <property type="term" value="C:endomembrane system"/>
    <property type="evidence" value="ECO:0000318"/>
    <property type="project" value="GO_Central"/>
</dbReference>
<dbReference type="GO" id="GO:0005886">
    <property type="term" value="C:plasma membrane"/>
    <property type="evidence" value="ECO:0000318"/>
    <property type="project" value="GO_Central"/>
</dbReference>
<dbReference type="GO" id="GO:0098793">
    <property type="term" value="C:presynapse"/>
    <property type="evidence" value="ECO:0007669"/>
    <property type="project" value="GOC"/>
</dbReference>
<dbReference type="GO" id="GO:0031201">
    <property type="term" value="C:SNARE complex"/>
    <property type="evidence" value="ECO:0000318"/>
    <property type="project" value="GO_Central"/>
</dbReference>
<dbReference type="GO" id="GO:0005484">
    <property type="term" value="F:SNAP receptor activity"/>
    <property type="evidence" value="ECO:0000318"/>
    <property type="project" value="GO_Central"/>
</dbReference>
<dbReference type="GO" id="GO:0000149">
    <property type="term" value="F:SNARE binding"/>
    <property type="evidence" value="ECO:0000318"/>
    <property type="project" value="GO_Central"/>
</dbReference>
<dbReference type="GO" id="GO:0006887">
    <property type="term" value="P:exocytosis"/>
    <property type="evidence" value="ECO:0000318"/>
    <property type="project" value="GO_Central"/>
</dbReference>
<dbReference type="GO" id="GO:0006886">
    <property type="term" value="P:intracellular protein transport"/>
    <property type="evidence" value="ECO:0000318"/>
    <property type="project" value="GO_Central"/>
</dbReference>
<dbReference type="GO" id="GO:0007614">
    <property type="term" value="P:short-term memory"/>
    <property type="evidence" value="ECO:0000316"/>
    <property type="project" value="WormBase"/>
</dbReference>
<dbReference type="GO" id="GO:0016081">
    <property type="term" value="P:synaptic vesicle docking"/>
    <property type="evidence" value="ECO:0000250"/>
    <property type="project" value="UniProtKB"/>
</dbReference>
<dbReference type="GO" id="GO:0048278">
    <property type="term" value="P:vesicle docking"/>
    <property type="evidence" value="ECO:0000318"/>
    <property type="project" value="GO_Central"/>
</dbReference>
<dbReference type="GO" id="GO:0006906">
    <property type="term" value="P:vesicle fusion"/>
    <property type="evidence" value="ECO:0000318"/>
    <property type="project" value="GO_Central"/>
</dbReference>
<dbReference type="CDD" id="cd15848">
    <property type="entry name" value="SNARE_syntaxin1-like"/>
    <property type="match status" value="1"/>
</dbReference>
<dbReference type="CDD" id="cd00179">
    <property type="entry name" value="SynN"/>
    <property type="match status" value="1"/>
</dbReference>
<dbReference type="FunFam" id="1.20.5.110:FF:000126">
    <property type="entry name" value="Protein CBR-SYX-2"/>
    <property type="match status" value="1"/>
</dbReference>
<dbReference type="Gene3D" id="1.20.5.110">
    <property type="match status" value="1"/>
</dbReference>
<dbReference type="Gene3D" id="1.20.58.70">
    <property type="match status" value="1"/>
</dbReference>
<dbReference type="InterPro" id="IPR010989">
    <property type="entry name" value="SNARE"/>
</dbReference>
<dbReference type="InterPro" id="IPR045242">
    <property type="entry name" value="Syntaxin"/>
</dbReference>
<dbReference type="InterPro" id="IPR006012">
    <property type="entry name" value="Syntaxin/epimorphin_CS"/>
</dbReference>
<dbReference type="InterPro" id="IPR006011">
    <property type="entry name" value="Syntaxin_N"/>
</dbReference>
<dbReference type="InterPro" id="IPR000727">
    <property type="entry name" value="T_SNARE_dom"/>
</dbReference>
<dbReference type="PANTHER" id="PTHR19957">
    <property type="entry name" value="SYNTAXIN"/>
    <property type="match status" value="1"/>
</dbReference>
<dbReference type="PANTHER" id="PTHR19957:SF113">
    <property type="entry name" value="SYNTAXIN-2-RELATED"/>
    <property type="match status" value="1"/>
</dbReference>
<dbReference type="Pfam" id="PF05739">
    <property type="entry name" value="SNARE"/>
    <property type="match status" value="1"/>
</dbReference>
<dbReference type="Pfam" id="PF00804">
    <property type="entry name" value="Syntaxin"/>
    <property type="match status" value="1"/>
</dbReference>
<dbReference type="SMART" id="SM00503">
    <property type="entry name" value="SynN"/>
    <property type="match status" value="1"/>
</dbReference>
<dbReference type="SMART" id="SM00397">
    <property type="entry name" value="t_SNARE"/>
    <property type="match status" value="1"/>
</dbReference>
<dbReference type="SUPFAM" id="SSF47661">
    <property type="entry name" value="t-snare proteins"/>
    <property type="match status" value="1"/>
</dbReference>
<dbReference type="PROSITE" id="PS00914">
    <property type="entry name" value="SYNTAXIN"/>
    <property type="match status" value="1"/>
</dbReference>
<dbReference type="PROSITE" id="PS50192">
    <property type="entry name" value="T_SNARE"/>
    <property type="match status" value="1"/>
</dbReference>
<name>STX2_CAEEL</name>
<reference key="1">
    <citation type="journal article" date="1998" name="Science">
        <title>Genome sequence of the nematode C. elegans: a platform for investigating biology.</title>
        <authorList>
            <consortium name="The C. elegans sequencing consortium"/>
        </authorList>
    </citation>
    <scope>NUCLEOTIDE SEQUENCE [LARGE SCALE GENOMIC DNA]</scope>
    <source>
        <strain>Bristol N2</strain>
    </source>
</reference>
<evidence type="ECO:0000250" key="1"/>
<evidence type="ECO:0000255" key="2"/>
<evidence type="ECO:0000255" key="3">
    <source>
        <dbReference type="PROSITE-ProRule" id="PRU00202"/>
    </source>
</evidence>
<evidence type="ECO:0000305" key="4"/>
<protein>
    <recommendedName>
        <fullName>Putative syntaxin-2</fullName>
    </recommendedName>
</protein>
<sequence>MRDRLNEFQSRVTDRFDEVELSPARPPSAAEYVDRRFEEVRNAIASVRGEIEKLRRDQQHVLALTIADPRDKNILENQIGTIRRRTGDLRKLVRQAEDDFLEFTKQVQSVTEKRMRQNQLELLKDNLNKLINLFNETHQDYKSRVSVRVRRQLQTVGQDLTDEDINRIMENSGSEQLFFREVNPLSVSGQAAYEDVKKRHGEIKDLENNIAMLEEIFLDLQHLTEAQDEMVTNIDNNVENGLEQVKQGSANVKTAVEYKKSAMRKKICVAAILITILLILIIVAIILAVVLSRGNNNNK</sequence>
<proteinExistence type="inferred from homology"/>
<comment type="function">
    <text evidence="1">Potentially involved in docking of synaptic vesicles at presynaptic active zones.</text>
</comment>
<comment type="subcellular location">
    <subcellularLocation>
        <location evidence="4">Membrane</location>
        <topology evidence="4">Single-pass type IV membrane protein</topology>
    </subcellularLocation>
</comment>
<comment type="similarity">
    <text evidence="4">Belongs to the syntaxin family.</text>
</comment>
<keyword id="KW-0175">Coiled coil</keyword>
<keyword id="KW-0472">Membrane</keyword>
<keyword id="KW-0532">Neurotransmitter transport</keyword>
<keyword id="KW-1185">Reference proteome</keyword>
<keyword id="KW-0812">Transmembrane</keyword>
<keyword id="KW-1133">Transmembrane helix</keyword>
<keyword id="KW-0813">Transport</keyword>
<organism>
    <name type="scientific">Caenorhabditis elegans</name>
    <dbReference type="NCBI Taxonomy" id="6239"/>
    <lineage>
        <taxon>Eukaryota</taxon>
        <taxon>Metazoa</taxon>
        <taxon>Ecdysozoa</taxon>
        <taxon>Nematoda</taxon>
        <taxon>Chromadorea</taxon>
        <taxon>Rhabditida</taxon>
        <taxon>Rhabditina</taxon>
        <taxon>Rhabditomorpha</taxon>
        <taxon>Rhabditoidea</taxon>
        <taxon>Rhabditidae</taxon>
        <taxon>Peloderinae</taxon>
        <taxon>Caenorhabditis</taxon>
    </lineage>
</organism>
<accession>Q20574</accession>